<gene>
    <name evidence="13 16" type="primary">Nbn</name>
    <name evidence="14" type="synonym">Nbs1</name>
</gene>
<feature type="chain" id="PRO_0000231044" description="Nibrin">
    <location>
        <begin position="1"/>
        <end position="751"/>
    </location>
</feature>
<feature type="domain" description="FHA" evidence="3">
    <location>
        <begin position="24"/>
        <end position="83"/>
    </location>
</feature>
<feature type="domain" description="BRCT 1" evidence="2">
    <location>
        <begin position="105"/>
        <end position="181"/>
    </location>
</feature>
<feature type="domain" description="BRCT 2" evidence="1">
    <location>
        <begin position="224"/>
        <end position="315"/>
    </location>
</feature>
<feature type="region of interest" description="Mediates interaction with SP100" evidence="7">
    <location>
        <begin position="111"/>
        <end position="328"/>
    </location>
</feature>
<feature type="region of interest" description="Interaction with MTOR, MAPKAP1 and RICTOR" evidence="1">
    <location>
        <begin position="221"/>
        <end position="403"/>
    </location>
</feature>
<feature type="region of interest" description="Disordered" evidence="4">
    <location>
        <begin position="389"/>
        <end position="418"/>
    </location>
</feature>
<feature type="region of interest" description="Disordered" evidence="4">
    <location>
        <begin position="444"/>
        <end position="479"/>
    </location>
</feature>
<feature type="region of interest" description="Disordered" evidence="4">
    <location>
        <begin position="491"/>
        <end position="550"/>
    </location>
</feature>
<feature type="region of interest" description="Disordered" evidence="4">
    <location>
        <begin position="576"/>
        <end position="645"/>
    </location>
</feature>
<feature type="region of interest" description="Disordered" evidence="4">
    <location>
        <begin position="731"/>
        <end position="751"/>
    </location>
</feature>
<feature type="short sequence motif" description="Nuclear localization signal" evidence="1">
    <location>
        <begin position="461"/>
        <end position="467"/>
    </location>
</feature>
<feature type="short sequence motif" description="FxF/Y motif" evidence="1">
    <location>
        <begin position="738"/>
        <end position="747"/>
    </location>
</feature>
<feature type="compositionally biased region" description="Polar residues" evidence="4">
    <location>
        <begin position="446"/>
        <end position="457"/>
    </location>
</feature>
<feature type="compositionally biased region" description="Basic and acidic residues" evidence="4">
    <location>
        <begin position="502"/>
        <end position="518"/>
    </location>
</feature>
<feature type="compositionally biased region" description="Basic and acidic residues" evidence="4">
    <location>
        <begin position="528"/>
        <end position="539"/>
    </location>
</feature>
<feature type="compositionally biased region" description="Basic and acidic residues" evidence="4">
    <location>
        <begin position="577"/>
        <end position="599"/>
    </location>
</feature>
<feature type="compositionally biased region" description="Basic and acidic residues" evidence="4">
    <location>
        <begin position="615"/>
        <end position="636"/>
    </location>
</feature>
<feature type="compositionally biased region" description="Basic and acidic residues" evidence="4">
    <location>
        <begin position="731"/>
        <end position="742"/>
    </location>
</feature>
<feature type="modified residue" description="Phosphothreonine" evidence="1">
    <location>
        <position position="337"/>
    </location>
</feature>
<feature type="modified residue" description="Phosphoserine; by ATM" evidence="9">
    <location>
        <position position="343"/>
    </location>
</feature>
<feature type="modified residue" description="Phosphoserine" evidence="1">
    <location>
        <position position="347"/>
    </location>
</feature>
<feature type="modified residue" description="Phosphoserine" evidence="17 18">
    <location>
        <position position="398"/>
    </location>
</feature>
<feature type="modified residue" description="Phosphoserine; by CDK2" evidence="11">
    <location>
        <position position="433"/>
    </location>
</feature>
<feature type="modified residue" description="Phosphoserine" evidence="1">
    <location>
        <position position="508"/>
    </location>
</feature>
<feature type="cross-link" description="Glycyl lysine isopeptide (Lys-Gly) (interchain with G-Cter in ubiquitin)" evidence="1">
    <location>
        <position position="436"/>
    </location>
</feature>
<feature type="cross-link" description="Glycyl lysine isopeptide (Lys-Gly) (interchain with G-Cter in SUMO2)" evidence="1">
    <location>
        <position position="569"/>
    </location>
</feature>
<feature type="cross-link" description="Glycyl lysine isopeptide (Lys-Gly) (interchain with G-Cter in SUMO2)" evidence="1">
    <location>
        <position position="580"/>
    </location>
</feature>
<feature type="cross-link" description="Glycyl lysine isopeptide (Lys-Gly) (interchain with G-Cter in ubiquitin)" evidence="1">
    <location>
        <position position="684"/>
    </location>
</feature>
<feature type="cross-link" description="Glycyl lysine isopeptide (Lys-Gly) (interchain with G-Cter in ubiquitin)" evidence="1">
    <location>
        <position position="688"/>
    </location>
</feature>
<feature type="cross-link" description="Glycyl lysine isopeptide (Lys-Gly) (interchain with G-Cter in ubiquitin)" evidence="1">
    <location>
        <position position="733"/>
    </location>
</feature>
<feature type="mutagenesis site" description="Does not affect interaction with TERF2." evidence="11">
    <original>S</original>
    <variation>A</variation>
    <location>
        <position position="433"/>
    </location>
</feature>
<feature type="mutagenesis site" description="Mimics phosphorylation; impaired interaction with TERF2." evidence="11">
    <original>S</original>
    <variation>D</variation>
    <location>
        <position position="433"/>
    </location>
</feature>
<feature type="sequence conflict" description="In Ref. 4; AAH44773." evidence="15" ref="4">
    <original>G</original>
    <variation>S</variation>
    <location>
        <position position="9"/>
    </location>
</feature>
<feature type="sequence conflict" description="In Ref. 3; AAC62113." evidence="15" ref="3">
    <original>AP</original>
    <variation>SL</variation>
    <location>
        <begin position="11"/>
        <end position="12"/>
    </location>
</feature>
<feature type="sequence conflict" description="In Ref. 5; BAE22356." evidence="15" ref="5">
    <original>P</original>
    <variation>Q</variation>
    <location>
        <position position="325"/>
    </location>
</feature>
<feature type="sequence conflict" description="In Ref. 2; BAA76298." evidence="15" ref="2">
    <original>D</original>
    <variation>E</variation>
    <location>
        <position position="366"/>
    </location>
</feature>
<feature type="sequence conflict" description="In Ref. 2; BAA76298." evidence="15" ref="2">
    <original>I</original>
    <variation>F</variation>
    <location>
        <position position="455"/>
    </location>
</feature>
<feature type="sequence conflict" description="In Ref. 4; AAH44773." evidence="15" ref="4">
    <original>L</original>
    <variation>Q</variation>
    <location>
        <position position="513"/>
    </location>
</feature>
<feature type="sequence conflict" description="In Ref. 4; AAH44773." evidence="15" ref="4">
    <original>N</original>
    <variation>K</variation>
    <location>
        <position position="664"/>
    </location>
</feature>
<feature type="sequence conflict" description="In Ref. 4; AAH44773." evidence="15" ref="4">
    <original>E</original>
    <variation>D</variation>
    <location>
        <position position="676"/>
    </location>
</feature>
<feature type="sequence conflict" description="In Ref. 4; AAH44773." evidence="15" ref="4">
    <original>P</original>
    <variation>S</variation>
    <location>
        <position position="679"/>
    </location>
</feature>
<sequence length="751" mass="83795">MWKLLPAAGAAPGEPYRLLAGVEYVVGRKNCGILIENDQSISRNHAVLTVNFPVTSLSQTDEIPTLTIKDNSKYGTFVNEEKMQTGLSCTLKTGDRVTFGVFESKFRVEYEPLVVCSSCLDVSGKTVLNQAILQLGGLTANNWTEECTHLVMSAVKVTIKTICALICGRPIIKPEYFSEFLKAVESKKQPPDIESFYPPIDEPAIGSKSVDLSGRHERKQIFKGKTFVFLNAKQHKKLSSAVAFGGGEARLMAEDDEEEQSFFSAPGTCVVDVGITNTQLIISHSQKKWIHLIMDTLQRNGLRPIPEAEIGLAVIFMTTENYCNPQGQPCTELKTTTPGPSLSQVLSANGKIIPSAPVNMTTYVADTESEPADTCMPLSERPEEVKIPGLEQSSRKLSQETFNIKEAPKPSSKANNVASDTLVRGKTPSYQLSPMKFPVANKNKDWTSQQQQNSIKNYFQPCTRKRERDEDNPELSSCKSSRMELSCSLLEQTQPAGPSLWKSKEHQSQNATLDREADTSSVGGMDIELNRKSPDRKPLPTETLRPRKRKDVDLATEEEVLEELLRSTKPELAVQVKVEKQEADDTIRKKPRMDAERNRPLNGGSEPESNSALQEDEREKKDELQTESWSTKHEIANSDGLQDSSEELPRKLLLTEFRSLVVSNHNSTSRNLCVNECGPLKNFKKFKKATFPGAGKLPHIIGGSDLVGHHARKNTELEEWLKQEMEVQKQQAKEESLADDLFRYNPNVKRR</sequence>
<reference key="1">
    <citation type="journal article" date="1999" name="Cytogenet. Cell Genet.">
        <title>Identification, characterization, and mapping of a mouse homolog of the gene mutated in Nijmegen breakage syndrome.</title>
        <authorList>
            <person name="Vissinga C.S."/>
            <person name="Yeo T.C."/>
            <person name="Woessner J."/>
            <person name="Massa H.F."/>
            <person name="Wilson R.K."/>
            <person name="Trask B.J."/>
            <person name="Concannon P."/>
        </authorList>
    </citation>
    <scope>NUCLEOTIDE SEQUENCE [MRNA]</scope>
</reference>
<reference key="2">
    <citation type="submission" date="1998-08" db="EMBL/GenBank/DDBJ databases">
        <title>Structure of the mouse Nijmegen breakage syndrome (Nibrin/Nbs1) protein.</title>
        <authorList>
            <person name="Saito T."/>
        </authorList>
    </citation>
    <scope>NUCLEOTIDE SEQUENCE [MRNA]</scope>
    <source>
        <tissue>Brain</tissue>
        <tissue>Testis</tissue>
    </source>
</reference>
<reference key="3">
    <citation type="submission" date="1998-09" db="EMBL/GenBank/DDBJ databases">
        <title>Isolation of 50 cDNAs differentially expressed in embryonic forebrain as compared to mid and hindbrain: a strategy to identify candidate genes involved in human neurodevelopmental diseases.</title>
        <authorList>
            <person name="Mas C."/>
            <person name="Bourgeois F."/>
            <person name="Simonneau M."/>
        </authorList>
    </citation>
    <scope>NUCLEOTIDE SEQUENCE [MRNA]</scope>
    <source>
        <tissue>Brain stem</tissue>
    </source>
</reference>
<reference key="4">
    <citation type="journal article" date="2004" name="Genome Res.">
        <title>The status, quality, and expansion of the NIH full-length cDNA project: the Mammalian Gene Collection (MGC).</title>
        <authorList>
            <consortium name="The MGC Project Team"/>
        </authorList>
    </citation>
    <scope>NUCLEOTIDE SEQUENCE [LARGE SCALE MRNA]</scope>
    <source>
        <strain>Czech II</strain>
        <strain>FVB/N</strain>
        <tissue>Colon</tissue>
        <tissue>Mammary gland</tissue>
    </source>
</reference>
<reference key="5">
    <citation type="journal article" date="2005" name="Science">
        <title>The transcriptional landscape of the mammalian genome.</title>
        <authorList>
            <person name="Carninci P."/>
            <person name="Kasukawa T."/>
            <person name="Katayama S."/>
            <person name="Gough J."/>
            <person name="Frith M.C."/>
            <person name="Maeda N."/>
            <person name="Oyama R."/>
            <person name="Ravasi T."/>
            <person name="Lenhard B."/>
            <person name="Wells C."/>
            <person name="Kodzius R."/>
            <person name="Shimokawa K."/>
            <person name="Bajic V.B."/>
            <person name="Brenner S.E."/>
            <person name="Batalov S."/>
            <person name="Forrest A.R."/>
            <person name="Zavolan M."/>
            <person name="Davis M.J."/>
            <person name="Wilming L.G."/>
            <person name="Aidinis V."/>
            <person name="Allen J.E."/>
            <person name="Ambesi-Impiombato A."/>
            <person name="Apweiler R."/>
            <person name="Aturaliya R.N."/>
            <person name="Bailey T.L."/>
            <person name="Bansal M."/>
            <person name="Baxter L."/>
            <person name="Beisel K.W."/>
            <person name="Bersano T."/>
            <person name="Bono H."/>
            <person name="Chalk A.M."/>
            <person name="Chiu K.P."/>
            <person name="Choudhary V."/>
            <person name="Christoffels A."/>
            <person name="Clutterbuck D.R."/>
            <person name="Crowe M.L."/>
            <person name="Dalla E."/>
            <person name="Dalrymple B.P."/>
            <person name="de Bono B."/>
            <person name="Della Gatta G."/>
            <person name="di Bernardo D."/>
            <person name="Down T."/>
            <person name="Engstrom P."/>
            <person name="Fagiolini M."/>
            <person name="Faulkner G."/>
            <person name="Fletcher C.F."/>
            <person name="Fukushima T."/>
            <person name="Furuno M."/>
            <person name="Futaki S."/>
            <person name="Gariboldi M."/>
            <person name="Georgii-Hemming P."/>
            <person name="Gingeras T.R."/>
            <person name="Gojobori T."/>
            <person name="Green R.E."/>
            <person name="Gustincich S."/>
            <person name="Harbers M."/>
            <person name="Hayashi Y."/>
            <person name="Hensch T.K."/>
            <person name="Hirokawa N."/>
            <person name="Hill D."/>
            <person name="Huminiecki L."/>
            <person name="Iacono M."/>
            <person name="Ikeo K."/>
            <person name="Iwama A."/>
            <person name="Ishikawa T."/>
            <person name="Jakt M."/>
            <person name="Kanapin A."/>
            <person name="Katoh M."/>
            <person name="Kawasawa Y."/>
            <person name="Kelso J."/>
            <person name="Kitamura H."/>
            <person name="Kitano H."/>
            <person name="Kollias G."/>
            <person name="Krishnan S.P."/>
            <person name="Kruger A."/>
            <person name="Kummerfeld S.K."/>
            <person name="Kurochkin I.V."/>
            <person name="Lareau L.F."/>
            <person name="Lazarevic D."/>
            <person name="Lipovich L."/>
            <person name="Liu J."/>
            <person name="Liuni S."/>
            <person name="McWilliam S."/>
            <person name="Madan Babu M."/>
            <person name="Madera M."/>
            <person name="Marchionni L."/>
            <person name="Matsuda H."/>
            <person name="Matsuzawa S."/>
            <person name="Miki H."/>
            <person name="Mignone F."/>
            <person name="Miyake S."/>
            <person name="Morris K."/>
            <person name="Mottagui-Tabar S."/>
            <person name="Mulder N."/>
            <person name="Nakano N."/>
            <person name="Nakauchi H."/>
            <person name="Ng P."/>
            <person name="Nilsson R."/>
            <person name="Nishiguchi S."/>
            <person name="Nishikawa S."/>
            <person name="Nori F."/>
            <person name="Ohara O."/>
            <person name="Okazaki Y."/>
            <person name="Orlando V."/>
            <person name="Pang K.C."/>
            <person name="Pavan W.J."/>
            <person name="Pavesi G."/>
            <person name="Pesole G."/>
            <person name="Petrovsky N."/>
            <person name="Piazza S."/>
            <person name="Reed J."/>
            <person name="Reid J.F."/>
            <person name="Ring B.Z."/>
            <person name="Ringwald M."/>
            <person name="Rost B."/>
            <person name="Ruan Y."/>
            <person name="Salzberg S.L."/>
            <person name="Sandelin A."/>
            <person name="Schneider C."/>
            <person name="Schoenbach C."/>
            <person name="Sekiguchi K."/>
            <person name="Semple C.A."/>
            <person name="Seno S."/>
            <person name="Sessa L."/>
            <person name="Sheng Y."/>
            <person name="Shibata Y."/>
            <person name="Shimada H."/>
            <person name="Shimada K."/>
            <person name="Silva D."/>
            <person name="Sinclair B."/>
            <person name="Sperling S."/>
            <person name="Stupka E."/>
            <person name="Sugiura K."/>
            <person name="Sultana R."/>
            <person name="Takenaka Y."/>
            <person name="Taki K."/>
            <person name="Tammoja K."/>
            <person name="Tan S.L."/>
            <person name="Tang S."/>
            <person name="Taylor M.S."/>
            <person name="Tegner J."/>
            <person name="Teichmann S.A."/>
            <person name="Ueda H.R."/>
            <person name="van Nimwegen E."/>
            <person name="Verardo R."/>
            <person name="Wei C.L."/>
            <person name="Yagi K."/>
            <person name="Yamanishi H."/>
            <person name="Zabarovsky E."/>
            <person name="Zhu S."/>
            <person name="Zimmer A."/>
            <person name="Hide W."/>
            <person name="Bult C."/>
            <person name="Grimmond S.M."/>
            <person name="Teasdale R.D."/>
            <person name="Liu E.T."/>
            <person name="Brusic V."/>
            <person name="Quackenbush J."/>
            <person name="Wahlestedt C."/>
            <person name="Mattick J.S."/>
            <person name="Hume D.A."/>
            <person name="Kai C."/>
            <person name="Sasaki D."/>
            <person name="Tomaru Y."/>
            <person name="Fukuda S."/>
            <person name="Kanamori-Katayama M."/>
            <person name="Suzuki M."/>
            <person name="Aoki J."/>
            <person name="Arakawa T."/>
            <person name="Iida J."/>
            <person name="Imamura K."/>
            <person name="Itoh M."/>
            <person name="Kato T."/>
            <person name="Kawaji H."/>
            <person name="Kawagashira N."/>
            <person name="Kawashima T."/>
            <person name="Kojima M."/>
            <person name="Kondo S."/>
            <person name="Konno H."/>
            <person name="Nakano K."/>
            <person name="Ninomiya N."/>
            <person name="Nishio T."/>
            <person name="Okada M."/>
            <person name="Plessy C."/>
            <person name="Shibata K."/>
            <person name="Shiraki T."/>
            <person name="Suzuki S."/>
            <person name="Tagami M."/>
            <person name="Waki K."/>
            <person name="Watahiki A."/>
            <person name="Okamura-Oho Y."/>
            <person name="Suzuki H."/>
            <person name="Kawai J."/>
            <person name="Hayashizaki Y."/>
        </authorList>
    </citation>
    <scope>NUCLEOTIDE SEQUENCE [LARGE SCALE MRNA] OF 1-613</scope>
    <source>
        <strain>C57BL/6J</strain>
        <tissue>Medulla oblongata</tissue>
    </source>
</reference>
<reference key="6">
    <citation type="journal article" date="2000" name="Hum. Mol. Genet.">
        <title>Expression pattern of the Nijmegen breakage syndrome gene, Nbs1, during murine development.</title>
        <authorList>
            <person name="Wilda M."/>
            <person name="Demuth I."/>
            <person name="Concannon P."/>
            <person name="Sperling K."/>
            <person name="Hameister H."/>
        </authorList>
    </citation>
    <scope>TISSUE SPECIFICITY</scope>
    <scope>DEVELOPMENTAL STAGE</scope>
</reference>
<reference key="7">
    <citation type="journal article" date="2001" name="Curr. Biol.">
        <title>Targeted disruption of the Nijmegen breakage syndrome gene NBS1 leads to early embryonic lethality in mice.</title>
        <authorList>
            <person name="Zhu J."/>
            <person name="Petersen S."/>
            <person name="Tessarollo L."/>
            <person name="Nussenzweig A."/>
        </authorList>
    </citation>
    <scope>DISRUPTION PHENOTYPE</scope>
</reference>
<reference key="8">
    <citation type="journal article" date="2002" name="Biochem. Biophys. Res. Commun.">
        <title>Recruitment of NBS1 into PML oncogenic domains via interaction with SP100 protein.</title>
        <authorList>
            <person name="Naka K."/>
            <person name="Ikeda K."/>
            <person name="Motoyama N."/>
        </authorList>
    </citation>
    <scope>INTERACTION WITH SP100</scope>
</reference>
<reference key="9">
    <citation type="journal article" date="2007" name="Curr. Biol.">
        <title>The Mre11 complex influences DNA repair, synapsis, and crossing over in murine meiosis.</title>
        <authorList>
            <person name="Cherry S.M."/>
            <person name="Adelman C.A."/>
            <person name="Theunissen J.W."/>
            <person name="Hassold T.J."/>
            <person name="Hunt P.A."/>
            <person name="Petrini J.H."/>
        </authorList>
    </citation>
    <scope>FUNCTION</scope>
</reference>
<reference key="10">
    <citation type="journal article" date="2007" name="J. Biol. Chem.">
        <title>Mice lacking protein phosphatase 5 are defective in ataxia telangiectasia mutated (ATM)-mediated cell cycle arrest.</title>
        <authorList>
            <person name="Yong W."/>
            <person name="Bao S."/>
            <person name="Chen H."/>
            <person name="Li D."/>
            <person name="Sanchez E.R."/>
            <person name="Shou W."/>
        </authorList>
    </citation>
    <scope>PHOSPHORYLATION AT SER-343</scope>
</reference>
<reference key="11">
    <citation type="journal article" date="2007" name="Science">
        <title>ATM and ATR substrate analysis reveals extensive protein networks responsive to DNA damage.</title>
        <authorList>
            <person name="Matsuoka S."/>
            <person name="Ballif B.A."/>
            <person name="Smogorzewska A."/>
            <person name="McDonald E.R. III"/>
            <person name="Hurov K.E."/>
            <person name="Luo J."/>
            <person name="Bakalarski C.E."/>
            <person name="Zhao Z."/>
            <person name="Solimini N."/>
            <person name="Lerenthal Y."/>
            <person name="Shiloh Y."/>
            <person name="Gygi S.P."/>
            <person name="Elledge S.J."/>
        </authorList>
    </citation>
    <scope>PHOSPHORYLATION [LARGE SCALE ANALYSIS] AT SER-398</scope>
    <scope>IDENTIFICATION BY MASS SPECTROMETRY [LARGE SCALE ANALYSIS]</scope>
    <source>
        <tissue>Embryonic fibroblast</tissue>
    </source>
</reference>
<reference key="12">
    <citation type="journal article" date="2010" name="Cell">
        <title>A tissue-specific atlas of mouse protein phosphorylation and expression.</title>
        <authorList>
            <person name="Huttlin E.L."/>
            <person name="Jedrychowski M.P."/>
            <person name="Elias J.E."/>
            <person name="Goswami T."/>
            <person name="Rad R."/>
            <person name="Beausoleil S.A."/>
            <person name="Villen J."/>
            <person name="Haas W."/>
            <person name="Sowa M.E."/>
            <person name="Gygi S.P."/>
        </authorList>
    </citation>
    <scope>PHOSPHORYLATION [LARGE SCALE ANALYSIS] AT SER-398</scope>
    <scope>IDENTIFICATION BY MASS SPECTROMETRY [LARGE SCALE ANALYSIS]</scope>
    <source>
        <tissue>Spleen</tissue>
    </source>
</reference>
<reference key="13">
    <citation type="journal article" date="2012" name="Mol. Cell">
        <title>Skp2 E3 ligase integrates ATM activation and homologous recombination repair by ubiquitinating NBS1.</title>
        <authorList>
            <person name="Wu J."/>
            <person name="Zhang X."/>
            <person name="Zhang L."/>
            <person name="Wu C.Y."/>
            <person name="Rezaeian A.H."/>
            <person name="Chan C.H."/>
            <person name="Li J.M."/>
            <person name="Wang J."/>
            <person name="Gao Y."/>
            <person name="Han F."/>
            <person name="Jeong Y.S."/>
            <person name="Yuan X."/>
            <person name="Khanna K.K."/>
            <person name="Jin J."/>
            <person name="Zeng Y.X."/>
            <person name="Lin H.K."/>
        </authorList>
    </citation>
    <scope>FUNCTION</scope>
    <scope>UBIQUITINATION</scope>
</reference>
<reference key="14">
    <citation type="journal article" date="2017" name="Mol. Cell">
        <title>NBS1 phosphorylation status dictates repair choice of dysfunctional telomeres.</title>
        <authorList>
            <person name="Rai R."/>
            <person name="Hu C."/>
            <person name="Broton C."/>
            <person name="Chen Y."/>
            <person name="Lei M."/>
            <person name="Chang S."/>
        </authorList>
    </citation>
    <scope>FUNCTION</scope>
    <scope>SUBCELLULAR LOCATION</scope>
    <scope>INTERACTION WITH TERF2</scope>
    <scope>PHOSPHORYLATION AT SER-433</scope>
    <scope>MUTAGENESIS OF SER-433</scope>
</reference>
<reference key="15">
    <citation type="journal article" date="2018" name="Mol. Cell">
        <title>MRI is a DNA damage response adaptor during classical non-homologous end joining.</title>
        <authorList>
            <person name="Hung P.J."/>
            <person name="Johnson B."/>
            <person name="Chen B.R."/>
            <person name="Byrum A.K."/>
            <person name="Bredemeyer A.L."/>
            <person name="Yewdell W.T."/>
            <person name="Johnson T.E."/>
            <person name="Lee B.J."/>
            <person name="Deivasigamani S."/>
            <person name="Hindi I."/>
            <person name="Amatya P."/>
            <person name="Gross M.L."/>
            <person name="Paull T.T."/>
            <person name="Pisapia D.J."/>
            <person name="Chaudhuri J."/>
            <person name="Petrini J.J.H."/>
            <person name="Mosammaparast N."/>
            <person name="Amarasinghe G.K."/>
            <person name="Zha S."/>
            <person name="Tyler J.K."/>
            <person name="Sleckman B.P."/>
        </authorList>
    </citation>
    <scope>INTERACTION WITH CYREN</scope>
</reference>
<evidence type="ECO:0000250" key="1">
    <source>
        <dbReference type="UniProtKB" id="O60934"/>
    </source>
</evidence>
<evidence type="ECO:0000255" key="2"/>
<evidence type="ECO:0000255" key="3">
    <source>
        <dbReference type="PROSITE-ProRule" id="PRU00086"/>
    </source>
</evidence>
<evidence type="ECO:0000256" key="4">
    <source>
        <dbReference type="SAM" id="MobiDB-lite"/>
    </source>
</evidence>
<evidence type="ECO:0000269" key="5">
    <source>
    </source>
</evidence>
<evidence type="ECO:0000269" key="6">
    <source>
    </source>
</evidence>
<evidence type="ECO:0000269" key="7">
    <source>
    </source>
</evidence>
<evidence type="ECO:0000269" key="8">
    <source>
    </source>
</evidence>
<evidence type="ECO:0000269" key="9">
    <source>
    </source>
</evidence>
<evidence type="ECO:0000269" key="10">
    <source>
    </source>
</evidence>
<evidence type="ECO:0000269" key="11">
    <source>
    </source>
</evidence>
<evidence type="ECO:0000269" key="12">
    <source>
    </source>
</evidence>
<evidence type="ECO:0000303" key="13">
    <source>
    </source>
</evidence>
<evidence type="ECO:0000303" key="14">
    <source>
    </source>
</evidence>
<evidence type="ECO:0000305" key="15"/>
<evidence type="ECO:0000312" key="16">
    <source>
        <dbReference type="MGI" id="MGI:1351625"/>
    </source>
</evidence>
<evidence type="ECO:0007744" key="17">
    <source>
    </source>
</evidence>
<evidence type="ECO:0007744" key="18">
    <source>
    </source>
</evidence>
<accession>Q9R207</accession>
<accession>O88981</accession>
<accession>Q3UY57</accession>
<accession>Q811I6</accession>
<accession>Q8CCY0</accession>
<accession>Q9R1X1</accession>
<proteinExistence type="evidence at protein level"/>
<organism>
    <name type="scientific">Mus musculus</name>
    <name type="common">Mouse</name>
    <dbReference type="NCBI Taxonomy" id="10090"/>
    <lineage>
        <taxon>Eukaryota</taxon>
        <taxon>Metazoa</taxon>
        <taxon>Chordata</taxon>
        <taxon>Craniata</taxon>
        <taxon>Vertebrata</taxon>
        <taxon>Euteleostomi</taxon>
        <taxon>Mammalia</taxon>
        <taxon>Eutheria</taxon>
        <taxon>Euarchontoglires</taxon>
        <taxon>Glires</taxon>
        <taxon>Rodentia</taxon>
        <taxon>Myomorpha</taxon>
        <taxon>Muroidea</taxon>
        <taxon>Muridae</taxon>
        <taxon>Murinae</taxon>
        <taxon>Mus</taxon>
        <taxon>Mus</taxon>
    </lineage>
</organism>
<dbReference type="EMBL" id="AF076687">
    <property type="protein sequence ID" value="AAD20943.1"/>
    <property type="molecule type" value="mRNA"/>
</dbReference>
<dbReference type="EMBL" id="AB016988">
    <property type="protein sequence ID" value="BAA76298.1"/>
    <property type="molecule type" value="mRNA"/>
</dbReference>
<dbReference type="EMBL" id="AF092840">
    <property type="protein sequence ID" value="AAC62113.1"/>
    <property type="molecule type" value="mRNA"/>
</dbReference>
<dbReference type="EMBL" id="BC044773">
    <property type="protein sequence ID" value="AAH44773.1"/>
    <property type="molecule type" value="mRNA"/>
</dbReference>
<dbReference type="EMBL" id="BC055061">
    <property type="protein sequence ID" value="AAH55061.1"/>
    <property type="molecule type" value="mRNA"/>
</dbReference>
<dbReference type="EMBL" id="AK134960">
    <property type="protein sequence ID" value="BAE22356.1"/>
    <property type="molecule type" value="mRNA"/>
</dbReference>
<dbReference type="EMBL" id="AK031933">
    <property type="protein sequence ID" value="BAC27610.1"/>
    <property type="molecule type" value="mRNA"/>
</dbReference>
<dbReference type="CCDS" id="CCDS17986.1"/>
<dbReference type="RefSeq" id="NP_038780.3">
    <property type="nucleotide sequence ID" value="NM_013752.3"/>
</dbReference>
<dbReference type="BioGRID" id="205163">
    <property type="interactions" value="21"/>
</dbReference>
<dbReference type="ComplexPortal" id="CPX-4703">
    <property type="entry name" value="MRN double-strand break repair complex"/>
</dbReference>
<dbReference type="DIP" id="DIP-46804N"/>
<dbReference type="FunCoup" id="Q9R207">
    <property type="interactions" value="2850"/>
</dbReference>
<dbReference type="IntAct" id="Q9R207">
    <property type="interactions" value="2"/>
</dbReference>
<dbReference type="STRING" id="10090.ENSMUSP00000029879"/>
<dbReference type="GlyGen" id="Q9R207">
    <property type="glycosylation" value="1 site, 1 N-linked glycan (1 site)"/>
</dbReference>
<dbReference type="iPTMnet" id="Q9R207"/>
<dbReference type="PhosphoSitePlus" id="Q9R207"/>
<dbReference type="SwissPalm" id="Q9R207"/>
<dbReference type="jPOST" id="Q9R207"/>
<dbReference type="PaxDb" id="10090-ENSMUSP00000029879"/>
<dbReference type="PeptideAtlas" id="Q9R207"/>
<dbReference type="ProteomicsDB" id="286153"/>
<dbReference type="Pumba" id="Q9R207"/>
<dbReference type="Antibodypedia" id="690">
    <property type="antibodies" value="1603 antibodies from 48 providers"/>
</dbReference>
<dbReference type="DNASU" id="27354"/>
<dbReference type="Ensembl" id="ENSMUST00000029879.15">
    <property type="protein sequence ID" value="ENSMUSP00000029879.9"/>
    <property type="gene ID" value="ENSMUSG00000028224.15"/>
</dbReference>
<dbReference type="GeneID" id="27354"/>
<dbReference type="KEGG" id="mmu:27354"/>
<dbReference type="UCSC" id="uc008sbn.1">
    <property type="organism name" value="mouse"/>
</dbReference>
<dbReference type="AGR" id="MGI:1351625"/>
<dbReference type="CTD" id="4683"/>
<dbReference type="MGI" id="MGI:1351625">
    <property type="gene designation" value="Nbn"/>
</dbReference>
<dbReference type="VEuPathDB" id="HostDB:ENSMUSG00000028224"/>
<dbReference type="eggNOG" id="ENOG502QQ7Y">
    <property type="taxonomic scope" value="Eukaryota"/>
</dbReference>
<dbReference type="GeneTree" id="ENSGT00390000000521"/>
<dbReference type="InParanoid" id="Q9R207"/>
<dbReference type="OMA" id="KKNFKMF"/>
<dbReference type="OrthoDB" id="552194at2759"/>
<dbReference type="PhylomeDB" id="Q9R207"/>
<dbReference type="TreeFam" id="TF101103"/>
<dbReference type="Reactome" id="R-MMU-2559586">
    <property type="pathway name" value="DNA Damage/Telomere Stress Induced Senescence"/>
</dbReference>
<dbReference type="Reactome" id="R-MMU-5685938">
    <property type="pathway name" value="HDR through Single Strand Annealing (SSA)"/>
</dbReference>
<dbReference type="Reactome" id="R-MMU-5685939">
    <property type="pathway name" value="HDR through MMEJ (alt-NHEJ)"/>
</dbReference>
<dbReference type="Reactome" id="R-MMU-5685942">
    <property type="pathway name" value="HDR through Homologous Recombination (HRR)"/>
</dbReference>
<dbReference type="Reactome" id="R-MMU-5693548">
    <property type="pathway name" value="Sensing of DNA Double Strand Breaks"/>
</dbReference>
<dbReference type="Reactome" id="R-MMU-5693565">
    <property type="pathway name" value="Recruitment and ATM-mediated phosphorylation of repair and signaling proteins at DNA double strand breaks"/>
</dbReference>
<dbReference type="Reactome" id="R-MMU-5693568">
    <property type="pathway name" value="Resolution of D-loop Structures through Holliday Junction Intermediates"/>
</dbReference>
<dbReference type="Reactome" id="R-MMU-5693571">
    <property type="pathway name" value="Nonhomologous End-Joining (NHEJ)"/>
</dbReference>
<dbReference type="Reactome" id="R-MMU-5693579">
    <property type="pathway name" value="Homologous DNA Pairing and Strand Exchange"/>
</dbReference>
<dbReference type="Reactome" id="R-MMU-5693607">
    <property type="pathway name" value="Processing of DNA double-strand break ends"/>
</dbReference>
<dbReference type="Reactome" id="R-MMU-5693616">
    <property type="pathway name" value="Presynaptic phase of homologous DNA pairing and strand exchange"/>
</dbReference>
<dbReference type="Reactome" id="R-MMU-6804756">
    <property type="pathway name" value="Regulation of TP53 Activity through Phosphorylation"/>
</dbReference>
<dbReference type="Reactome" id="R-MMU-69473">
    <property type="pathway name" value="G2/M DNA damage checkpoint"/>
</dbReference>
<dbReference type="BioGRID-ORCS" id="27354">
    <property type="hits" value="15 hits in 120 CRISPR screens"/>
</dbReference>
<dbReference type="CD-CODE" id="01CA17F3">
    <property type="entry name" value="Centrosome"/>
</dbReference>
<dbReference type="ChiTaRS" id="Nbn">
    <property type="organism name" value="mouse"/>
</dbReference>
<dbReference type="PRO" id="PR:Q9R207"/>
<dbReference type="Proteomes" id="UP000000589">
    <property type="component" value="Chromosome 4"/>
</dbReference>
<dbReference type="RNAct" id="Q9R207">
    <property type="molecule type" value="protein"/>
</dbReference>
<dbReference type="Bgee" id="ENSMUSG00000028224">
    <property type="expression patterns" value="Expressed in saccule of membranous labyrinth and 290 other cell types or tissues"/>
</dbReference>
<dbReference type="ExpressionAtlas" id="Q9R207">
    <property type="expression patterns" value="baseline and differential"/>
</dbReference>
<dbReference type="GO" id="GO:0070533">
    <property type="term" value="C:BRCA1-C complex"/>
    <property type="evidence" value="ECO:0000266"/>
    <property type="project" value="ComplexPortal"/>
</dbReference>
<dbReference type="GO" id="GO:0098687">
    <property type="term" value="C:chromosomal region"/>
    <property type="evidence" value="ECO:0000303"/>
    <property type="project" value="ComplexPortal"/>
</dbReference>
<dbReference type="GO" id="GO:0000781">
    <property type="term" value="C:chromosome, telomeric region"/>
    <property type="evidence" value="ECO:0000314"/>
    <property type="project" value="UniProtKB"/>
</dbReference>
<dbReference type="GO" id="GO:0005794">
    <property type="term" value="C:Golgi apparatus"/>
    <property type="evidence" value="ECO:0007669"/>
    <property type="project" value="Ensembl"/>
</dbReference>
<dbReference type="GO" id="GO:0030870">
    <property type="term" value="C:Mre11 complex"/>
    <property type="evidence" value="ECO:0000314"/>
    <property type="project" value="UniProtKB"/>
</dbReference>
<dbReference type="GO" id="GO:0042405">
    <property type="term" value="C:nuclear inclusion body"/>
    <property type="evidence" value="ECO:0000250"/>
    <property type="project" value="UniProtKB"/>
</dbReference>
<dbReference type="GO" id="GO:0005730">
    <property type="term" value="C:nucleolus"/>
    <property type="evidence" value="ECO:0007669"/>
    <property type="project" value="Ensembl"/>
</dbReference>
<dbReference type="GO" id="GO:0005634">
    <property type="term" value="C:nucleus"/>
    <property type="evidence" value="ECO:0000314"/>
    <property type="project" value="MGI"/>
</dbReference>
<dbReference type="GO" id="GO:0016605">
    <property type="term" value="C:PML body"/>
    <property type="evidence" value="ECO:0000314"/>
    <property type="project" value="BHF-UCL"/>
</dbReference>
<dbReference type="GO" id="GO:0005657">
    <property type="term" value="C:replication fork"/>
    <property type="evidence" value="ECO:0000314"/>
    <property type="project" value="MGI"/>
</dbReference>
<dbReference type="GO" id="GO:0035861">
    <property type="term" value="C:site of double-strand break"/>
    <property type="evidence" value="ECO:0000250"/>
    <property type="project" value="UniProtKB"/>
</dbReference>
<dbReference type="GO" id="GO:0140463">
    <property type="term" value="F:chromatin-protein adaptor activity"/>
    <property type="evidence" value="ECO:0000314"/>
    <property type="project" value="UniProtKB"/>
</dbReference>
<dbReference type="GO" id="GO:0003684">
    <property type="term" value="F:damaged DNA binding"/>
    <property type="evidence" value="ECO:0000314"/>
    <property type="project" value="MGI"/>
</dbReference>
<dbReference type="GO" id="GO:0140297">
    <property type="term" value="F:DNA-binding transcription factor binding"/>
    <property type="evidence" value="ECO:0000250"/>
    <property type="project" value="UniProtKB"/>
</dbReference>
<dbReference type="GO" id="GO:0042393">
    <property type="term" value="F:histone binding"/>
    <property type="evidence" value="ECO:0007669"/>
    <property type="project" value="Ensembl"/>
</dbReference>
<dbReference type="GO" id="GO:0140031">
    <property type="term" value="F:phosphorylation-dependent protein binding"/>
    <property type="evidence" value="ECO:0000250"/>
    <property type="project" value="UniProtKB"/>
</dbReference>
<dbReference type="GO" id="GO:0043539">
    <property type="term" value="F:protein serine/threonine kinase activator activity"/>
    <property type="evidence" value="ECO:0000250"/>
    <property type="project" value="UniProtKB"/>
</dbReference>
<dbReference type="GO" id="GO:0001832">
    <property type="term" value="P:blastocyst growth"/>
    <property type="evidence" value="ECO:0000315"/>
    <property type="project" value="UniProtKB"/>
</dbReference>
<dbReference type="GO" id="GO:0000077">
    <property type="term" value="P:DNA damage checkpoint signaling"/>
    <property type="evidence" value="ECO:0000266"/>
    <property type="project" value="MGI"/>
</dbReference>
<dbReference type="GO" id="GO:0000729">
    <property type="term" value="P:DNA double-strand break processing"/>
    <property type="evidence" value="ECO:0000250"/>
    <property type="project" value="UniProtKB"/>
</dbReference>
<dbReference type="GO" id="GO:0110025">
    <property type="term" value="P:DNA strand resection involved in replication fork processing"/>
    <property type="evidence" value="ECO:0000303"/>
    <property type="project" value="ComplexPortal"/>
</dbReference>
<dbReference type="GO" id="GO:0006302">
    <property type="term" value="P:double-strand break repair"/>
    <property type="evidence" value="ECO:0000250"/>
    <property type="project" value="UniProtKB"/>
</dbReference>
<dbReference type="GO" id="GO:0097681">
    <property type="term" value="P:double-strand break repair via alternative nonhomologous end joining"/>
    <property type="evidence" value="ECO:0000314"/>
    <property type="project" value="UniProtKB"/>
</dbReference>
<dbReference type="GO" id="GO:0000724">
    <property type="term" value="P:double-strand break repair via homologous recombination"/>
    <property type="evidence" value="ECO:0007669"/>
    <property type="project" value="Ensembl"/>
</dbReference>
<dbReference type="GO" id="GO:0035825">
    <property type="term" value="P:homologous recombination"/>
    <property type="evidence" value="ECO:0000303"/>
    <property type="project" value="ComplexPortal"/>
</dbReference>
<dbReference type="GO" id="GO:0001701">
    <property type="term" value="P:in utero embryonic development"/>
    <property type="evidence" value="ECO:0000315"/>
    <property type="project" value="UniProtKB"/>
</dbReference>
<dbReference type="GO" id="GO:0097193">
    <property type="term" value="P:intrinsic apoptotic signaling pathway"/>
    <property type="evidence" value="ECO:0000315"/>
    <property type="project" value="MGI"/>
</dbReference>
<dbReference type="GO" id="GO:0045190">
    <property type="term" value="P:isotype switching"/>
    <property type="evidence" value="ECO:0000314"/>
    <property type="project" value="UniProtKB"/>
</dbReference>
<dbReference type="GO" id="GO:0051321">
    <property type="term" value="P:meiotic cell cycle"/>
    <property type="evidence" value="ECO:0007669"/>
    <property type="project" value="UniProtKB-KW"/>
</dbReference>
<dbReference type="GO" id="GO:0007095">
    <property type="term" value="P:mitotic G2 DNA damage checkpoint signaling"/>
    <property type="evidence" value="ECO:0000315"/>
    <property type="project" value="MGI"/>
</dbReference>
<dbReference type="GO" id="GO:0044818">
    <property type="term" value="P:mitotic G2/M transition checkpoint"/>
    <property type="evidence" value="ECO:0000303"/>
    <property type="project" value="ComplexPortal"/>
</dbReference>
<dbReference type="GO" id="GO:1904354">
    <property type="term" value="P:negative regulation of telomere capping"/>
    <property type="evidence" value="ECO:0007669"/>
    <property type="project" value="Ensembl"/>
</dbReference>
<dbReference type="GO" id="GO:0007405">
    <property type="term" value="P:neuroblast proliferation"/>
    <property type="evidence" value="ECO:0000315"/>
    <property type="project" value="MGI"/>
</dbReference>
<dbReference type="GO" id="GO:0050885">
    <property type="term" value="P:neuromuscular process controlling balance"/>
    <property type="evidence" value="ECO:0000315"/>
    <property type="project" value="MGI"/>
</dbReference>
<dbReference type="GO" id="GO:2000781">
    <property type="term" value="P:positive regulation of double-strand break repair"/>
    <property type="evidence" value="ECO:0007669"/>
    <property type="project" value="Ensembl"/>
</dbReference>
<dbReference type="GO" id="GO:0032206">
    <property type="term" value="P:positive regulation of telomere maintenance"/>
    <property type="evidence" value="ECO:0007669"/>
    <property type="project" value="Ensembl"/>
</dbReference>
<dbReference type="GO" id="GO:0031848">
    <property type="term" value="P:protection from non-homologous end joining at telomere"/>
    <property type="evidence" value="ECO:0000314"/>
    <property type="project" value="UniProtKB"/>
</dbReference>
<dbReference type="GO" id="GO:1990166">
    <property type="term" value="P:protein localization to site of double-strand break"/>
    <property type="evidence" value="ECO:0000250"/>
    <property type="project" value="UniProtKB"/>
</dbReference>
<dbReference type="GO" id="GO:0062176">
    <property type="term" value="P:R-loop processing"/>
    <property type="evidence" value="ECO:0000250"/>
    <property type="project" value="UniProtKB"/>
</dbReference>
<dbReference type="GO" id="GO:0048145">
    <property type="term" value="P:regulation of fibroblast proliferation"/>
    <property type="evidence" value="ECO:0000250"/>
    <property type="project" value="UniProtKB"/>
</dbReference>
<dbReference type="GO" id="GO:0090656">
    <property type="term" value="P:t-circle formation"/>
    <property type="evidence" value="ECO:0007669"/>
    <property type="project" value="Ensembl"/>
</dbReference>
<dbReference type="GO" id="GO:0000723">
    <property type="term" value="P:telomere maintenance"/>
    <property type="evidence" value="ECO:0000250"/>
    <property type="project" value="UniProtKB"/>
</dbReference>
<dbReference type="GO" id="GO:0043247">
    <property type="term" value="P:telomere maintenance in response to DNA damage"/>
    <property type="evidence" value="ECO:0000314"/>
    <property type="project" value="UniProtKB"/>
</dbReference>
<dbReference type="GO" id="GO:0031860">
    <property type="term" value="P:telomeric 3' overhang formation"/>
    <property type="evidence" value="ECO:0007669"/>
    <property type="project" value="Ensembl"/>
</dbReference>
<dbReference type="CDD" id="cd17741">
    <property type="entry name" value="BRCT_nibrin"/>
    <property type="match status" value="1"/>
</dbReference>
<dbReference type="CDD" id="cd22667">
    <property type="entry name" value="FHA_NBN"/>
    <property type="match status" value="1"/>
</dbReference>
<dbReference type="FunFam" id="2.60.200.20:FF:000017">
    <property type="entry name" value="Nibrin"/>
    <property type="match status" value="1"/>
</dbReference>
<dbReference type="FunFam" id="3.40.50.10190:FF:000024">
    <property type="entry name" value="Nibrin"/>
    <property type="match status" value="1"/>
</dbReference>
<dbReference type="FunFam" id="3.40.50.10980:FF:000001">
    <property type="entry name" value="Nibrin"/>
    <property type="match status" value="1"/>
</dbReference>
<dbReference type="Gene3D" id="2.60.200.20">
    <property type="match status" value="1"/>
</dbReference>
<dbReference type="Gene3D" id="3.40.50.10190">
    <property type="entry name" value="BRCT domain"/>
    <property type="match status" value="1"/>
</dbReference>
<dbReference type="Gene3D" id="3.40.50.10980">
    <property type="entry name" value="Nibrin, BRCT2 domain"/>
    <property type="match status" value="1"/>
</dbReference>
<dbReference type="InterPro" id="IPR036420">
    <property type="entry name" value="BRCT_dom_sf"/>
</dbReference>
<dbReference type="InterPro" id="IPR000253">
    <property type="entry name" value="FHA_dom"/>
</dbReference>
<dbReference type="InterPro" id="IPR040227">
    <property type="entry name" value="Nibrin-rel"/>
</dbReference>
<dbReference type="InterPro" id="IPR032429">
    <property type="entry name" value="Nibrin_BRCT2"/>
</dbReference>
<dbReference type="InterPro" id="IPR043014">
    <property type="entry name" value="Nibrin_BRCT2_sf"/>
</dbReference>
<dbReference type="InterPro" id="IPR013908">
    <property type="entry name" value="Nibrin_C"/>
</dbReference>
<dbReference type="InterPro" id="IPR016592">
    <property type="entry name" value="Nibrin_met"/>
</dbReference>
<dbReference type="InterPro" id="IPR008984">
    <property type="entry name" value="SMAD_FHA_dom_sf"/>
</dbReference>
<dbReference type="PANTHER" id="PTHR12162:SF0">
    <property type="entry name" value="NIBRIN"/>
    <property type="match status" value="1"/>
</dbReference>
<dbReference type="PANTHER" id="PTHR12162">
    <property type="entry name" value="NIBRIN-RELATED"/>
    <property type="match status" value="1"/>
</dbReference>
<dbReference type="Pfam" id="PF00498">
    <property type="entry name" value="FHA"/>
    <property type="match status" value="1"/>
</dbReference>
<dbReference type="Pfam" id="PF08599">
    <property type="entry name" value="Nbs1_C"/>
    <property type="match status" value="1"/>
</dbReference>
<dbReference type="Pfam" id="PF16508">
    <property type="entry name" value="NIBRIN_BRCT_II"/>
    <property type="match status" value="1"/>
</dbReference>
<dbReference type="PIRSF" id="PIRSF011869">
    <property type="entry name" value="Nibrin_animal"/>
    <property type="match status" value="1"/>
</dbReference>
<dbReference type="SMART" id="SM00240">
    <property type="entry name" value="FHA"/>
    <property type="match status" value="1"/>
</dbReference>
<dbReference type="SMART" id="SM01348">
    <property type="entry name" value="Nbs1_C"/>
    <property type="match status" value="1"/>
</dbReference>
<dbReference type="SUPFAM" id="SSF52113">
    <property type="entry name" value="BRCT domain"/>
    <property type="match status" value="1"/>
</dbReference>
<dbReference type="SUPFAM" id="SSF49879">
    <property type="entry name" value="SMAD/FHA domain"/>
    <property type="match status" value="1"/>
</dbReference>
<dbReference type="PROSITE" id="PS50006">
    <property type="entry name" value="FHA_DOMAIN"/>
    <property type="match status" value="1"/>
</dbReference>
<comment type="function">
    <text evidence="1 8 10 11">Component of the MRN complex, which plays a central role in double-strand break (DSB) repair, DNA recombination, maintenance of telomere integrity and meiosis (PubMed:17291760, PubMed:22464731, PubMed:28216226). The MRN complex is involved in the repair of DNA double-strand breaks (DSBs) via homologous recombination (HR), an error-free mechanism which primarily occurs during S and G2 phases (By similarity). The complex (1) mediates the end resection of damaged DNA, which generates proper single-stranded DNA, a key initial steps in HR, and is (2) required for the recruitment of other repair factors and efficient activation of ATM and ATR upon DNA damage (By similarity). The MRN complex possesses single-strand endonuclease activity and double-strand-specific 3'-5' exonuclease activity, which are provided by MRE11, to initiate end resection, which is required for single-strand invasion and recombination (By similarity). Within the MRN complex, NBN acts as a protein-protein adapter, which specifically recognizes and binds phosphorylated proteins, promoting their recruitment to DNA damage sites (By similarity). Recruits MRE11 and RAD50 components of the MRN complex to DSBs in response to DNA damage (By similarity). Promotes the recruitment of PI3/PI4-kinase family members ATM, ATR, and probably DNA-PKcs to the DNA damage sites, activating their functions (PubMed:22464731). Mediates the recruitment of phosphorylated RBBP8/CtIP to DSBs, leading to cooperation between the MRN complex and RBBP8/CtIP to initiate end resection (By similarity). RBBP8/CtIP specifically promotes the endonuclease activity of the MRN complex to clear DNA ends containing protein adducts (By similarity). The MRN complex is also required for the processing of R-loops (By similarity). NBN also functions in telomere length maintenance via its interaction with TERF2: interaction with TERF2 during G1 phase preventing recruitment of DCLRE1B/Apollo to telomeres (PubMed:28216226). NBN also promotes DNA repair choice at dysfunctional telomeres: NBN phosphorylation by CDK2 promotes non-homologous end joining repair at telomeres, while unphosphorylated NBN promotes microhomology-mediated end-joining (MMEJ) repair (PubMed:28216226). Enhances AKT1 phosphorylation possibly by association with the mTORC2 complex (By similarity).</text>
</comment>
<comment type="subunit">
    <text evidence="1 7 11 12">Component of the MRN complex composed of two heterodimers RAD50 and MRE11 associated with a single NBN (By similarity). The MRN complexes dimerize on DNA to form joined MRN-MRN oligomers required for DNA double-strand break repair (By similarity). As part of the MRN complex, interacts with MCM9; the interaction recruits the complex to DNA repair sites (By similarity). Component of the BASC complex, at least composed of BRCA1, MSH2, MSH6, MLH1, ATM, BLM, RAD50, MRE11 and NBN (By similarity). Interacts with histone H2AX; this requires phosphorylation of H2AX on 'Ser-139' and promotes NBN recruitment to DNA damage sites (By similarity). Interacts with (phosphorylated) MDC1; promoting NBN recruitment to DNA damage sites (By similarity). Interacts with (phosphorylated) RAD17; promoting NBN recruitment to DNA damage sites (By similarity). Interacts (via FxF/Y motif) with ATM (By similarity). Interacts with HJURP (By similarity). Interacts with INTS3 (By similarity). Interacts with KPNA2 (By similarity). Interacts with TERF2; interaction is disrupted upon NBN phosphorylation by CDK2 (PubMed:28216226). Interacts with (phosphorylated) RBBP8/CtIP; the interaction links the role of the MRN complex in DNA double-strand break sensing to resection (By similarity). Interacts with SP100; recruits NBN to PML bodies (PubMed:12470659). Interacts with ATF2 (By similarity). Interacts with MTOR, MAPKAP1 isoform 2 and RICTOR; indicative for an association with the mTORC2 complex (By similarity). Interacts with MRNIP (By similarity). Interacts with UFL1; promoting UFL1 recruitment to double-strand breaks following DNA damage (By similarity). Interacts with CYREN (via XLF motif) (PubMed:30017584).</text>
</comment>
<comment type="interaction">
    <interactant intactId="EBI-2014862">
        <id>Q9R207</id>
    </interactant>
    <interactant intactId="EBI-2014813">
        <id>Q61216</id>
        <label>Mre11</label>
    </interactant>
    <organismsDiffer>false</organismsDiffer>
    <experiments>2</experiments>
</comment>
<comment type="subcellular location">
    <subcellularLocation>
        <location evidence="1">Nucleus</location>
    </subcellularLocation>
    <subcellularLocation>
        <location evidence="1">Chromosome</location>
    </subcellularLocation>
    <subcellularLocation>
        <location evidence="1">Nucleus</location>
        <location evidence="1">PML body</location>
    </subcellularLocation>
    <subcellularLocation>
        <location evidence="11">Chromosome</location>
        <location evidence="11">Telomere</location>
    </subcellularLocation>
    <text evidence="1">Localizes to discrete nuclear foci after treatment with genotoxic agents. Localizes to DNA double-strand breaks (DSBs); recruited to DNA damage sites via association with phosphorylated proteins, such as phosphorylated H2AX, phosphorylated MDC1 and phosphorylated RAD17. Acetylation of 'Lys-5' of histone H2AX (H2AXK5ac) promotes NBN/NBS1 assembly at the sites of DNA damage.</text>
</comment>
<comment type="tissue specificity">
    <text evidence="5">High expression in the liver, heart and testis. Low expression in all other tissues analyzed. In the cerebellum the postmitotic Purkinje cells are marked specifically.</text>
</comment>
<comment type="developmental stage">
    <text evidence="5">A low level of expression is observed in all tissues. Highly specific expression was observed in organs with physiologic DNA double strand breakage (DSB), such as testis, thymus and spleen. Enhanced expression is also found at sites of high proliferative activity. These are the subventricular layer of the telencephalon and the diencephalon, the liver, lung, kidney and gut, as well as striated and smooth muscle cells in various organs.</text>
</comment>
<comment type="domain">
    <text evidence="1">The FHA and BRCT domains specifically recognize and bind phosphorylated proteins.</text>
</comment>
<comment type="domain">
    <text evidence="1">The C-terminal domain contains a MRE11-binding site, and this interaction is required for the nuclear localization of the MRN complex.</text>
</comment>
<comment type="domain">
    <text evidence="1">The FxF/Y motif (also named EEXXXDDL motif) is required for the interaction with ATM and its recruitment to sites of DNA damage and promote the phosphorylation of ATM substrates, leading to the events of DNA damage response.</text>
</comment>
<comment type="PTM">
    <text evidence="1 10">Ubiquitinated at Lys-436 via 'Lys-6'-linked ubiquitin chains by RNF8, promoting NBN recruitment to DNA double-strand breaks (DSBs) (By similarity). Ubiquitinated at Lys-684 and Lys-688 via 'Lys-63'-linked ubiquitin chains by PELI1: ubiquitination takes place following PELI1 phosphorylation and promotes ATM activation and DNA repair (By similarity). Ubiquitinated at Lys-733 via 'Lys-63'-linked ubiquitin chains by the SCF(SKP2) complex: ubiquitination takes place following SKP2 phosphorylation and promotes ATM activation and DNA repair (PubMed:22464731).</text>
</comment>
<comment type="PTM">
    <text evidence="1 11">Phosphorylated by ATM in response of ionizing radiation, and such phosphorylation is responsible intra-S phase checkpoint control and telomere maintenance (By similarity). Phosphorylated at Ser-433 by CDK2 in S/G2 phases abolishes interaction with TERF2, enabling DCLRE1B/Apollo recruitment to telomeres (PubMed:28216226). Phosphorylation at Ser-433 in response to dysfunctional telomeres promotes non-homologous end joining repair at telomeres, while dephosphorylation by PPP1CA promotes microhomology-mediated end-joining (MMEJ) repair (PubMed:28216226).</text>
</comment>
<comment type="disruption phenotype">
    <text evidence="6">Early embryonic lethality (PubMed:11231126). Lethality in utero is associated with poorly developed embryonic and extraembryonic tissues (PubMed:11231126).</text>
</comment>
<comment type="similarity">
    <text evidence="15">Belongs to the Nibrin family.</text>
</comment>
<keyword id="KW-0131">Cell cycle</keyword>
<keyword id="KW-0158">Chromosome</keyword>
<keyword id="KW-0227">DNA damage</keyword>
<keyword id="KW-0234">DNA repair</keyword>
<keyword id="KW-1017">Isopeptide bond</keyword>
<keyword id="KW-0469">Meiosis</keyword>
<keyword id="KW-0539">Nucleus</keyword>
<keyword id="KW-0597">Phosphoprotein</keyword>
<keyword id="KW-1185">Reference proteome</keyword>
<keyword id="KW-0779">Telomere</keyword>
<keyword id="KW-0832">Ubl conjugation</keyword>
<protein>
    <recommendedName>
        <fullName evidence="13">Nibrin</fullName>
    </recommendedName>
    <alternativeName>
        <fullName>Cell cycle regulatory protein p95</fullName>
    </alternativeName>
    <alternativeName>
        <fullName evidence="13">Nijmegen breakage syndrome protein 1 homolog</fullName>
    </alternativeName>
</protein>
<name>NBN_MOUSE</name>